<sequence>MAELLAIKWDDNRDKLILLDQTILPNKIEYIEYDTAEGVYDSIKDMIVRGAPAIGVTAAYGLYFAAKVAPEDKFENFFKYLKEKSSYLDSSRPTAVNLSWALKVMESKALENKDKDVKEIKSILREEAKRIHEEDIEICKTIGENLITLLKDGVGILTHCNAGQLATSKYGTATSPMYLAKEKGWNFKVYSDETRPRLQGSTLTALELYEAGIDVTTITDNMAAMVMSQGKIDAVIVGCDRIAANGDTANKIGTMGVSILAKYFGIPMYIAAPTPSIDINTKTGEDIPIEERNPEEVTSRFGVWTAPKGVKVYNPGFDVTPHENITAIVTEKGIVYPPFKENLKKLFEK</sequence>
<dbReference type="EC" id="5.3.1.-" evidence="1"/>
<dbReference type="EMBL" id="CP000727">
    <property type="protein sequence ID" value="ABS37413.1"/>
    <property type="molecule type" value="Genomic_DNA"/>
</dbReference>
<dbReference type="EMBL" id="AM412317">
    <property type="protein sequence ID" value="CAL82818.1"/>
    <property type="molecule type" value="Genomic_DNA"/>
</dbReference>
<dbReference type="RefSeq" id="YP_001253792.1">
    <property type="nucleotide sequence ID" value="NC_009495.1"/>
</dbReference>
<dbReference type="RefSeq" id="YP_001387172.1">
    <property type="nucleotide sequence ID" value="NC_009698.1"/>
</dbReference>
<dbReference type="SMR" id="A5I1A6"/>
<dbReference type="GeneID" id="5185523"/>
<dbReference type="KEGG" id="cbh:CLC_1306"/>
<dbReference type="KEGG" id="cbo:CBO1268"/>
<dbReference type="PATRIC" id="fig|413999.7.peg.1254"/>
<dbReference type="HOGENOM" id="CLU_016218_1_2_9"/>
<dbReference type="PRO" id="PR:A5I1A6"/>
<dbReference type="Proteomes" id="UP000001986">
    <property type="component" value="Chromosome"/>
</dbReference>
<dbReference type="GO" id="GO:0046523">
    <property type="term" value="F:S-methyl-5-thioribose-1-phosphate isomerase activity"/>
    <property type="evidence" value="ECO:0000318"/>
    <property type="project" value="GO_Central"/>
</dbReference>
<dbReference type="GO" id="GO:0019509">
    <property type="term" value="P:L-methionine salvage from methylthioadenosine"/>
    <property type="evidence" value="ECO:0000318"/>
    <property type="project" value="GO_Central"/>
</dbReference>
<dbReference type="GO" id="GO:0019323">
    <property type="term" value="P:pentose catabolic process"/>
    <property type="evidence" value="ECO:0007669"/>
    <property type="project" value="UniProtKB-UniRule"/>
</dbReference>
<dbReference type="FunFam" id="1.20.120.420:FF:000001">
    <property type="entry name" value="Methylthioribose-1-phosphate isomerase"/>
    <property type="match status" value="1"/>
</dbReference>
<dbReference type="FunFam" id="3.40.50.10470:FF:000006">
    <property type="entry name" value="Methylthioribose-1-phosphate isomerase"/>
    <property type="match status" value="1"/>
</dbReference>
<dbReference type="Gene3D" id="1.20.120.420">
    <property type="entry name" value="translation initiation factor eif-2b, domain 1"/>
    <property type="match status" value="1"/>
</dbReference>
<dbReference type="Gene3D" id="3.40.50.10470">
    <property type="entry name" value="Translation initiation factor eif-2b, domain 2"/>
    <property type="match status" value="1"/>
</dbReference>
<dbReference type="HAMAP" id="MF_02229">
    <property type="entry name" value="Deoxyribose1P_isomerase"/>
    <property type="match status" value="1"/>
</dbReference>
<dbReference type="HAMAP" id="MF_01678">
    <property type="entry name" value="Salvage_MtnA"/>
    <property type="match status" value="1"/>
</dbReference>
<dbReference type="InterPro" id="IPR043679">
    <property type="entry name" value="Deoxyribose1P_isomerase_DrdI"/>
</dbReference>
<dbReference type="InterPro" id="IPR000649">
    <property type="entry name" value="IF-2B-related"/>
</dbReference>
<dbReference type="InterPro" id="IPR005251">
    <property type="entry name" value="IF-M1Pi"/>
</dbReference>
<dbReference type="InterPro" id="IPR042529">
    <property type="entry name" value="IF_2B-like_C"/>
</dbReference>
<dbReference type="InterPro" id="IPR011559">
    <property type="entry name" value="Initiation_fac_2B_a/b/d"/>
</dbReference>
<dbReference type="InterPro" id="IPR027363">
    <property type="entry name" value="M1Pi_N"/>
</dbReference>
<dbReference type="InterPro" id="IPR037171">
    <property type="entry name" value="NagB/RpiA_transferase-like"/>
</dbReference>
<dbReference type="NCBIfam" id="TIGR00524">
    <property type="entry name" value="eIF-2B_rel"/>
    <property type="match status" value="1"/>
</dbReference>
<dbReference type="NCBIfam" id="NF004326">
    <property type="entry name" value="PRK05720.1"/>
    <property type="match status" value="1"/>
</dbReference>
<dbReference type="NCBIfam" id="TIGR00512">
    <property type="entry name" value="salvage_mtnA"/>
    <property type="match status" value="1"/>
</dbReference>
<dbReference type="PANTHER" id="PTHR43475">
    <property type="entry name" value="METHYLTHIORIBOSE-1-PHOSPHATE ISOMERASE"/>
    <property type="match status" value="1"/>
</dbReference>
<dbReference type="PANTHER" id="PTHR43475:SF1">
    <property type="entry name" value="METHYLTHIORIBOSE-1-PHOSPHATE ISOMERASE"/>
    <property type="match status" value="1"/>
</dbReference>
<dbReference type="Pfam" id="PF01008">
    <property type="entry name" value="IF-2B"/>
    <property type="match status" value="1"/>
</dbReference>
<dbReference type="SUPFAM" id="SSF100950">
    <property type="entry name" value="NagB/RpiA/CoA transferase-like"/>
    <property type="match status" value="1"/>
</dbReference>
<accession>A5I1A6</accession>
<accession>A7G307</accession>
<organism>
    <name type="scientific">Clostridium botulinum (strain Hall / ATCC 3502 / NCTC 13319 / Type A)</name>
    <dbReference type="NCBI Taxonomy" id="441771"/>
    <lineage>
        <taxon>Bacteria</taxon>
        <taxon>Bacillati</taxon>
        <taxon>Bacillota</taxon>
        <taxon>Clostridia</taxon>
        <taxon>Eubacteriales</taxon>
        <taxon>Clostridiaceae</taxon>
        <taxon>Clostridium</taxon>
    </lineage>
</organism>
<proteinExistence type="inferred from homology"/>
<comment type="function">
    <text evidence="1">Catalyzes the isomerization of 5-deoxy-alpha-D-ribose 1-phosphate to 5-deoxy-D-ribulose 1-phosphate, as part of a 5-deoxyribose salvage pathway that recycles this toxic radical SAM enzyme by-product to mainstream metabolites.</text>
</comment>
<comment type="catalytic activity">
    <reaction evidence="1">
        <text>5-deoxy-alpha-D-ribose 1-phosphate = 5-deoxy-D-ribulose 1-phosphate</text>
        <dbReference type="Rhea" id="RHEA:61296"/>
        <dbReference type="ChEBI" id="CHEBI:58749"/>
        <dbReference type="ChEBI" id="CHEBI:144504"/>
    </reaction>
    <physiologicalReaction direction="left-to-right" evidence="1">
        <dbReference type="Rhea" id="RHEA:61297"/>
    </physiologicalReaction>
</comment>
<comment type="pathway">
    <text evidence="1">Carbohydrate degradation.</text>
</comment>
<comment type="similarity">
    <text evidence="1">Belongs to the EIF-2B alpha/beta/delta subunits family. DrdI subfamily.</text>
</comment>
<feature type="chain" id="PRO_0000357163" description="5-deoxyribose 1-phosphate isomerase">
    <location>
        <begin position="1"/>
        <end position="349"/>
    </location>
</feature>
<feature type="active site" description="Proton donor" evidence="1">
    <location>
        <position position="240"/>
    </location>
</feature>
<feature type="binding site" evidence="1">
    <location>
        <begin position="49"/>
        <end position="51"/>
    </location>
    <ligand>
        <name>substrate</name>
    </ligand>
</feature>
<feature type="binding site" evidence="1">
    <location>
        <position position="92"/>
    </location>
    <ligand>
        <name>substrate</name>
    </ligand>
</feature>
<feature type="binding site" evidence="1">
    <location>
        <position position="199"/>
    </location>
    <ligand>
        <name>substrate</name>
    </ligand>
</feature>
<feature type="binding site" evidence="1">
    <location>
        <begin position="250"/>
        <end position="251"/>
    </location>
    <ligand>
        <name>substrate</name>
    </ligand>
</feature>
<feature type="site" description="Transition state stabilizer" evidence="1">
    <location>
        <position position="160"/>
    </location>
</feature>
<gene>
    <name evidence="1" type="primary">drdI</name>
    <name type="ordered locus">CBO1268</name>
    <name type="ordered locus">CLC_1306</name>
</gene>
<protein>
    <recommendedName>
        <fullName evidence="1">5-deoxyribose 1-phosphate isomerase</fullName>
        <ecNumber evidence="1">5.3.1.-</ecNumber>
    </recommendedName>
</protein>
<reference key="1">
    <citation type="journal article" date="2007" name="Genome Res.">
        <title>Genome sequence of a proteolytic (Group I) Clostridium botulinum strain Hall A and comparative analysis of the clostridial genomes.</title>
        <authorList>
            <person name="Sebaihia M."/>
            <person name="Peck M.W."/>
            <person name="Minton N.P."/>
            <person name="Thomson N.R."/>
            <person name="Holden M.T.G."/>
            <person name="Mitchell W.J."/>
            <person name="Carter A.T."/>
            <person name="Bentley S.D."/>
            <person name="Mason D.R."/>
            <person name="Crossman L."/>
            <person name="Paul C.J."/>
            <person name="Ivens A."/>
            <person name="Wells-Bennik M.H.J."/>
            <person name="Davis I.J."/>
            <person name="Cerdeno-Tarraga A.M."/>
            <person name="Churcher C."/>
            <person name="Quail M.A."/>
            <person name="Chillingworth T."/>
            <person name="Feltwell T."/>
            <person name="Fraser A."/>
            <person name="Goodhead I."/>
            <person name="Hance Z."/>
            <person name="Jagels K."/>
            <person name="Larke N."/>
            <person name="Maddison M."/>
            <person name="Moule S."/>
            <person name="Mungall K."/>
            <person name="Norbertczak H."/>
            <person name="Rabbinowitsch E."/>
            <person name="Sanders M."/>
            <person name="Simmonds M."/>
            <person name="White B."/>
            <person name="Whithead S."/>
            <person name="Parkhill J."/>
        </authorList>
    </citation>
    <scope>NUCLEOTIDE SEQUENCE [LARGE SCALE GENOMIC DNA]</scope>
    <source>
        <strain>Hall / ATCC 3502 / NCTC 13319 / Type A</strain>
    </source>
</reference>
<reference key="2">
    <citation type="journal article" date="2007" name="PLoS ONE">
        <title>Analysis of the neurotoxin complex genes in Clostridium botulinum A1-A4 and B1 strains: BoNT/A3, /Ba4 and /B1 clusters are located within plasmids.</title>
        <authorList>
            <person name="Smith T.J."/>
            <person name="Hill K.K."/>
            <person name="Foley B.T."/>
            <person name="Detter J.C."/>
            <person name="Munk A.C."/>
            <person name="Bruce D.C."/>
            <person name="Doggett N.A."/>
            <person name="Smith L.A."/>
            <person name="Marks J.D."/>
            <person name="Xie G."/>
            <person name="Brettin T.S."/>
        </authorList>
    </citation>
    <scope>NUCLEOTIDE SEQUENCE [LARGE SCALE GENOMIC DNA]</scope>
    <source>
        <strain>Hall / ATCC 3502 / NCTC 13319 / Type A</strain>
    </source>
</reference>
<evidence type="ECO:0000255" key="1">
    <source>
        <dbReference type="HAMAP-Rule" id="MF_02229"/>
    </source>
</evidence>
<keyword id="KW-0119">Carbohydrate metabolism</keyword>
<keyword id="KW-0413">Isomerase</keyword>
<keyword id="KW-1185">Reference proteome</keyword>
<name>DRDI_CLOBH</name>